<gene>
    <name type="primary">ctdspl2-b</name>
    <name type="synonym">ctdspl2b</name>
</gene>
<proteinExistence type="evidence at transcript level"/>
<evidence type="ECO:0000250" key="1"/>
<evidence type="ECO:0000255" key="2">
    <source>
        <dbReference type="PROSITE-ProRule" id="PRU00336"/>
    </source>
</evidence>
<evidence type="ECO:0000256" key="3">
    <source>
        <dbReference type="SAM" id="MobiDB-lite"/>
    </source>
</evidence>
<evidence type="ECO:0000305" key="4"/>
<dbReference type="EC" id="3.1.3.-"/>
<dbReference type="EMBL" id="BC106290">
    <property type="protein sequence ID" value="AAI06291.1"/>
    <property type="molecule type" value="mRNA"/>
</dbReference>
<dbReference type="EMBL" id="BC110766">
    <property type="protein sequence ID" value="AAI10767.1"/>
    <property type="molecule type" value="mRNA"/>
</dbReference>
<dbReference type="RefSeq" id="NP_001089935.1">
    <property type="nucleotide sequence ID" value="NM_001096466.1"/>
</dbReference>
<dbReference type="RefSeq" id="XP_018106755.1">
    <property type="nucleotide sequence ID" value="XM_018251266.1"/>
</dbReference>
<dbReference type="SMR" id="Q3KQB6"/>
<dbReference type="DNASU" id="735004"/>
<dbReference type="GeneID" id="735004"/>
<dbReference type="KEGG" id="xla:735004"/>
<dbReference type="AGR" id="Xenbase:XB-GENE-950107"/>
<dbReference type="CTD" id="735004"/>
<dbReference type="Xenbase" id="XB-GENE-950107">
    <property type="gene designation" value="ctdspl2.L"/>
</dbReference>
<dbReference type="OrthoDB" id="277011at2759"/>
<dbReference type="Proteomes" id="UP000186698">
    <property type="component" value="Chromosome 3L"/>
</dbReference>
<dbReference type="Bgee" id="735004">
    <property type="expression patterns" value="Expressed in blastula and 19 other cell types or tissues"/>
</dbReference>
<dbReference type="GO" id="GO:0004721">
    <property type="term" value="F:phosphoprotein phosphatase activity"/>
    <property type="evidence" value="ECO:0000318"/>
    <property type="project" value="GO_Central"/>
</dbReference>
<dbReference type="CDD" id="cd07521">
    <property type="entry name" value="HAD_FCP1-like"/>
    <property type="match status" value="1"/>
</dbReference>
<dbReference type="FunFam" id="3.40.50.1000:FF:000015">
    <property type="entry name" value="CTD small phosphatase-like protein 2"/>
    <property type="match status" value="1"/>
</dbReference>
<dbReference type="Gene3D" id="3.40.50.1000">
    <property type="entry name" value="HAD superfamily/HAD-like"/>
    <property type="match status" value="1"/>
</dbReference>
<dbReference type="InterPro" id="IPR011948">
    <property type="entry name" value="Dullard_phosphatase"/>
</dbReference>
<dbReference type="InterPro" id="IPR004274">
    <property type="entry name" value="FCP1_dom"/>
</dbReference>
<dbReference type="InterPro" id="IPR036412">
    <property type="entry name" value="HAD-like_sf"/>
</dbReference>
<dbReference type="InterPro" id="IPR023214">
    <property type="entry name" value="HAD_sf"/>
</dbReference>
<dbReference type="InterPro" id="IPR050365">
    <property type="entry name" value="TIM50"/>
</dbReference>
<dbReference type="NCBIfam" id="TIGR02251">
    <property type="entry name" value="HIF-SF_euk"/>
    <property type="match status" value="1"/>
</dbReference>
<dbReference type="PANTHER" id="PTHR12210">
    <property type="entry name" value="DULLARD PROTEIN PHOSPHATASE"/>
    <property type="match status" value="1"/>
</dbReference>
<dbReference type="Pfam" id="PF03031">
    <property type="entry name" value="NIF"/>
    <property type="match status" value="1"/>
</dbReference>
<dbReference type="SMART" id="SM00577">
    <property type="entry name" value="CPDc"/>
    <property type="match status" value="1"/>
</dbReference>
<dbReference type="SUPFAM" id="SSF56784">
    <property type="entry name" value="HAD-like"/>
    <property type="match status" value="1"/>
</dbReference>
<dbReference type="PROSITE" id="PS50969">
    <property type="entry name" value="FCP1"/>
    <property type="match status" value="1"/>
</dbReference>
<protein>
    <recommendedName>
        <fullName>CTD small phosphatase-like protein 2-B</fullName>
        <shortName>CTDSP-like 2-B</shortName>
        <ecNumber>3.1.3.-</ecNumber>
    </recommendedName>
</protein>
<name>CTL2B_XENLA</name>
<feature type="chain" id="PRO_0000331471" description="CTD small phosphatase-like protein 2-B">
    <location>
        <begin position="1"/>
        <end position="466"/>
    </location>
</feature>
<feature type="domain" description="FCP1 homology" evidence="2">
    <location>
        <begin position="283"/>
        <end position="442"/>
    </location>
</feature>
<feature type="region of interest" description="Disordered" evidence="3">
    <location>
        <begin position="1"/>
        <end position="111"/>
    </location>
</feature>
<feature type="region of interest" description="Disordered" evidence="3">
    <location>
        <begin position="192"/>
        <end position="242"/>
    </location>
</feature>
<feature type="compositionally biased region" description="Acidic residues" evidence="3">
    <location>
        <begin position="30"/>
        <end position="39"/>
    </location>
</feature>
<feature type="compositionally biased region" description="Polar residues" evidence="3">
    <location>
        <begin position="46"/>
        <end position="62"/>
    </location>
</feature>
<feature type="compositionally biased region" description="Basic and acidic residues" evidence="3">
    <location>
        <begin position="63"/>
        <end position="82"/>
    </location>
</feature>
<feature type="sequence conflict" description="In Ref. 1; AAI10767." evidence="4" ref="1">
    <original>A</original>
    <variation>S</variation>
    <location>
        <position position="205"/>
    </location>
</feature>
<keyword id="KW-0378">Hydrolase</keyword>
<keyword id="KW-0904">Protein phosphatase</keyword>
<keyword id="KW-1185">Reference proteome</keyword>
<comment type="function">
    <text evidence="1">Probable phosphatase.</text>
</comment>
<comment type="similarity">
    <text evidence="4">Belongs to the CTDSPL2 family.</text>
</comment>
<accession>Q3KQB6</accession>
<accession>Q2TAQ9</accession>
<reference key="1">
    <citation type="submission" date="2005-10" db="EMBL/GenBank/DDBJ databases">
        <authorList>
            <consortium name="NIH - Xenopus Gene Collection (XGC) project"/>
        </authorList>
    </citation>
    <scope>NUCLEOTIDE SEQUENCE [LARGE SCALE MRNA]</scope>
    <source>
        <tissue>Embryo</tissue>
        <tissue>Testis</tissue>
    </source>
</reference>
<sequence>MRLRTRKGSPRSSHGAAGRTARCKRKHSEEDEEEESPLIEEDKLPTQETGLLSTIKNFIKGSTNKEDRENPAKKSRVERDFDNNLITSTPRTGDKPSKPIARVRRKSQVNGEATAYEVSQHMKQNGKLEDLPCTTSPPRTTLLGTIFSPVFNFFSPANKNGTSGSDSPGQAVEAEEIVKQLDMEKVDEFSTNTATNGASYPSPGAPVRTTASSWLEGTEDTPEREIPPLTAPVSPESGYSSAHAEAAYEEDWEVFDPYFFIKHVPPLTEEQLNRKPALPLKTRSTPEFSLVLDLDETLVHCSLNELEDAALTFPVLFQDVIYQVYVRLRPFFREFLERMSQIYEIILFTASKKVYADKLLNILDPKKRLVRHRLFREHCVCVQGNYIKDLNILGRDLSKTIIIDNSPQAFAYQLSNGIPIESWFMDKNDKELLKLVPFLQKLVELNEDVRPHIRDRFRLHDCLPPD</sequence>
<organism>
    <name type="scientific">Xenopus laevis</name>
    <name type="common">African clawed frog</name>
    <dbReference type="NCBI Taxonomy" id="8355"/>
    <lineage>
        <taxon>Eukaryota</taxon>
        <taxon>Metazoa</taxon>
        <taxon>Chordata</taxon>
        <taxon>Craniata</taxon>
        <taxon>Vertebrata</taxon>
        <taxon>Euteleostomi</taxon>
        <taxon>Amphibia</taxon>
        <taxon>Batrachia</taxon>
        <taxon>Anura</taxon>
        <taxon>Pipoidea</taxon>
        <taxon>Pipidae</taxon>
        <taxon>Xenopodinae</taxon>
        <taxon>Xenopus</taxon>
        <taxon>Xenopus</taxon>
    </lineage>
</organism>